<keyword id="KW-0963">Cytoplasm</keyword>
<keyword id="KW-0342">GTP-binding</keyword>
<keyword id="KW-0436">Ligase</keyword>
<keyword id="KW-0460">Magnesium</keyword>
<keyword id="KW-0479">Metal-binding</keyword>
<keyword id="KW-0547">Nucleotide-binding</keyword>
<keyword id="KW-0658">Purine biosynthesis</keyword>
<keyword id="KW-1185">Reference proteome</keyword>
<protein>
    <recommendedName>
        <fullName evidence="1">Adenylosuccinate synthetase</fullName>
        <shortName evidence="1">AMPSase</shortName>
        <shortName evidence="1">AdSS</shortName>
        <ecNumber evidence="1">6.3.4.4</ecNumber>
    </recommendedName>
    <alternativeName>
        <fullName evidence="1">IMP--aspartate ligase</fullName>
    </alternativeName>
</protein>
<comment type="function">
    <text evidence="1">Plays an important role in the de novo pathway of purine nucleotide biosynthesis. Catalyzes the first committed step in the biosynthesis of AMP from IMP.</text>
</comment>
<comment type="catalytic activity">
    <reaction evidence="1">
        <text>IMP + L-aspartate + GTP = N(6)-(1,2-dicarboxyethyl)-AMP + GDP + phosphate + 2 H(+)</text>
        <dbReference type="Rhea" id="RHEA:15753"/>
        <dbReference type="ChEBI" id="CHEBI:15378"/>
        <dbReference type="ChEBI" id="CHEBI:29991"/>
        <dbReference type="ChEBI" id="CHEBI:37565"/>
        <dbReference type="ChEBI" id="CHEBI:43474"/>
        <dbReference type="ChEBI" id="CHEBI:57567"/>
        <dbReference type="ChEBI" id="CHEBI:58053"/>
        <dbReference type="ChEBI" id="CHEBI:58189"/>
        <dbReference type="EC" id="6.3.4.4"/>
    </reaction>
</comment>
<comment type="cofactor">
    <cofactor evidence="1">
        <name>Mg(2+)</name>
        <dbReference type="ChEBI" id="CHEBI:18420"/>
    </cofactor>
    <text evidence="1">Binds 1 Mg(2+) ion per subunit.</text>
</comment>
<comment type="pathway">
    <text evidence="1">Purine metabolism; AMP biosynthesis via de novo pathway; AMP from IMP: step 1/2.</text>
</comment>
<comment type="subunit">
    <text evidence="1">Homodimer.</text>
</comment>
<comment type="subcellular location">
    <subcellularLocation>
        <location evidence="1">Cytoplasm</location>
    </subcellularLocation>
</comment>
<comment type="similarity">
    <text evidence="1">Belongs to the adenylosuccinate synthetase family.</text>
</comment>
<accession>Q1QY21</accession>
<feature type="chain" id="PRO_1000000800" description="Adenylosuccinate synthetase">
    <location>
        <begin position="1"/>
        <end position="431"/>
    </location>
</feature>
<feature type="active site" description="Proton acceptor" evidence="1">
    <location>
        <position position="14"/>
    </location>
</feature>
<feature type="active site" description="Proton donor" evidence="1">
    <location>
        <position position="42"/>
    </location>
</feature>
<feature type="binding site" evidence="1">
    <location>
        <begin position="13"/>
        <end position="19"/>
    </location>
    <ligand>
        <name>GTP</name>
        <dbReference type="ChEBI" id="CHEBI:37565"/>
    </ligand>
</feature>
<feature type="binding site" description="in other chain" evidence="1">
    <location>
        <begin position="14"/>
        <end position="17"/>
    </location>
    <ligand>
        <name>IMP</name>
        <dbReference type="ChEBI" id="CHEBI:58053"/>
        <note>ligand shared between dimeric partners</note>
    </ligand>
</feature>
<feature type="binding site" evidence="1">
    <location>
        <position position="14"/>
    </location>
    <ligand>
        <name>Mg(2+)</name>
        <dbReference type="ChEBI" id="CHEBI:18420"/>
    </ligand>
</feature>
<feature type="binding site" description="in other chain" evidence="1">
    <location>
        <begin position="39"/>
        <end position="42"/>
    </location>
    <ligand>
        <name>IMP</name>
        <dbReference type="ChEBI" id="CHEBI:58053"/>
        <note>ligand shared between dimeric partners</note>
    </ligand>
</feature>
<feature type="binding site" evidence="1">
    <location>
        <begin position="41"/>
        <end position="43"/>
    </location>
    <ligand>
        <name>GTP</name>
        <dbReference type="ChEBI" id="CHEBI:37565"/>
    </ligand>
</feature>
<feature type="binding site" evidence="1">
    <location>
        <position position="41"/>
    </location>
    <ligand>
        <name>Mg(2+)</name>
        <dbReference type="ChEBI" id="CHEBI:18420"/>
    </ligand>
</feature>
<feature type="binding site" description="in other chain" evidence="1">
    <location>
        <position position="130"/>
    </location>
    <ligand>
        <name>IMP</name>
        <dbReference type="ChEBI" id="CHEBI:58053"/>
        <note>ligand shared between dimeric partners</note>
    </ligand>
</feature>
<feature type="binding site" evidence="1">
    <location>
        <position position="144"/>
    </location>
    <ligand>
        <name>IMP</name>
        <dbReference type="ChEBI" id="CHEBI:58053"/>
        <note>ligand shared between dimeric partners</note>
    </ligand>
</feature>
<feature type="binding site" description="in other chain" evidence="1">
    <location>
        <position position="225"/>
    </location>
    <ligand>
        <name>IMP</name>
        <dbReference type="ChEBI" id="CHEBI:58053"/>
        <note>ligand shared between dimeric partners</note>
    </ligand>
</feature>
<feature type="binding site" description="in other chain" evidence="1">
    <location>
        <position position="240"/>
    </location>
    <ligand>
        <name>IMP</name>
        <dbReference type="ChEBI" id="CHEBI:58053"/>
        <note>ligand shared between dimeric partners</note>
    </ligand>
</feature>
<feature type="binding site" evidence="1">
    <location>
        <begin position="300"/>
        <end position="306"/>
    </location>
    <ligand>
        <name>substrate</name>
    </ligand>
</feature>
<feature type="binding site" description="in other chain" evidence="1">
    <location>
        <position position="304"/>
    </location>
    <ligand>
        <name>IMP</name>
        <dbReference type="ChEBI" id="CHEBI:58053"/>
        <note>ligand shared between dimeric partners</note>
    </ligand>
</feature>
<feature type="binding site" evidence="1">
    <location>
        <position position="306"/>
    </location>
    <ligand>
        <name>GTP</name>
        <dbReference type="ChEBI" id="CHEBI:37565"/>
    </ligand>
</feature>
<feature type="binding site" evidence="1">
    <location>
        <begin position="332"/>
        <end position="334"/>
    </location>
    <ligand>
        <name>GTP</name>
        <dbReference type="ChEBI" id="CHEBI:37565"/>
    </ligand>
</feature>
<feature type="binding site" evidence="1">
    <location>
        <begin position="414"/>
        <end position="416"/>
    </location>
    <ligand>
        <name>GTP</name>
        <dbReference type="ChEBI" id="CHEBI:37565"/>
    </ligand>
</feature>
<evidence type="ECO:0000255" key="1">
    <source>
        <dbReference type="HAMAP-Rule" id="MF_00011"/>
    </source>
</evidence>
<proteinExistence type="inferred from homology"/>
<reference key="1">
    <citation type="journal article" date="2011" name="Stand. Genomic Sci.">
        <title>Complete genome sequence of the halophilic and highly halotolerant Chromohalobacter salexigens type strain (1H11(T)).</title>
        <authorList>
            <person name="Copeland A."/>
            <person name="O'Connor K."/>
            <person name="Lucas S."/>
            <person name="Lapidus A."/>
            <person name="Berry K.W."/>
            <person name="Detter J.C."/>
            <person name="Del Rio T.G."/>
            <person name="Hammon N."/>
            <person name="Dalin E."/>
            <person name="Tice H."/>
            <person name="Pitluck S."/>
            <person name="Bruce D."/>
            <person name="Goodwin L."/>
            <person name="Han C."/>
            <person name="Tapia R."/>
            <person name="Saunders E."/>
            <person name="Schmutz J."/>
            <person name="Brettin T."/>
            <person name="Larimer F."/>
            <person name="Land M."/>
            <person name="Hauser L."/>
            <person name="Vargas C."/>
            <person name="Nieto J.J."/>
            <person name="Kyrpides N.C."/>
            <person name="Ivanova N."/>
            <person name="Goker M."/>
            <person name="Klenk H.P."/>
            <person name="Csonka L.N."/>
            <person name="Woyke T."/>
        </authorList>
    </citation>
    <scope>NUCLEOTIDE SEQUENCE [LARGE SCALE GENOMIC DNA]</scope>
    <source>
        <strain>ATCC BAA-138 / DSM 3043 / CIP 106854 / NCIMB 13768 / 1H11</strain>
    </source>
</reference>
<sequence length="431" mass="47098">MGKNVVVLGTQWGDEGKGKVVDLLTESAATVVRFQGGHNAGHTLVIDGEKTVLHLIPSGVLRADKTCVIGNGVVLSPEALMDEIRELEAKGVPVRERLRLSPACPLILPYHVRLDQAREKARGIAKIGTTGRGIGPAYEDKVARRGLRLGDMLHRERFASKLGEVLDYHNFVLTQYHHEAPVDFQRVLDEAMEIAEELRPMVCDTVSLVHDTRKAGENILFEGAQGSLLDIDHGTYPYVTSSNTTAGGTATGSGVGPLYLDYVLGITKAYTTRVGSGPFPTELFDEFGRHLAEKGHEFGATTGRARRCGWFDAVALRHAVQINSVSGLCLTKLDVLDGLENIRVCIGYRSKDGETIDTPVDSEGYEVIEPLYQDLPGWSESTLGVKRIEDLPNNARAYISFLEEQTGVPIDIISTGPDRNETIVLRNPFLD</sequence>
<dbReference type="EC" id="6.3.4.4" evidence="1"/>
<dbReference type="EMBL" id="CP000285">
    <property type="protein sequence ID" value="ABE58637.1"/>
    <property type="molecule type" value="Genomic_DNA"/>
</dbReference>
<dbReference type="RefSeq" id="WP_011506583.1">
    <property type="nucleotide sequence ID" value="NC_007963.1"/>
</dbReference>
<dbReference type="SMR" id="Q1QY21"/>
<dbReference type="STRING" id="290398.Csal_1282"/>
<dbReference type="GeneID" id="95334021"/>
<dbReference type="KEGG" id="csa:Csal_1282"/>
<dbReference type="eggNOG" id="COG0104">
    <property type="taxonomic scope" value="Bacteria"/>
</dbReference>
<dbReference type="HOGENOM" id="CLU_029848_0_0_6"/>
<dbReference type="OrthoDB" id="9807553at2"/>
<dbReference type="UniPathway" id="UPA00075">
    <property type="reaction ID" value="UER00335"/>
</dbReference>
<dbReference type="Proteomes" id="UP000000239">
    <property type="component" value="Chromosome"/>
</dbReference>
<dbReference type="GO" id="GO:0005737">
    <property type="term" value="C:cytoplasm"/>
    <property type="evidence" value="ECO:0007669"/>
    <property type="project" value="UniProtKB-SubCell"/>
</dbReference>
<dbReference type="GO" id="GO:0004019">
    <property type="term" value="F:adenylosuccinate synthase activity"/>
    <property type="evidence" value="ECO:0007669"/>
    <property type="project" value="UniProtKB-UniRule"/>
</dbReference>
<dbReference type="GO" id="GO:0005525">
    <property type="term" value="F:GTP binding"/>
    <property type="evidence" value="ECO:0007669"/>
    <property type="project" value="UniProtKB-UniRule"/>
</dbReference>
<dbReference type="GO" id="GO:0000287">
    <property type="term" value="F:magnesium ion binding"/>
    <property type="evidence" value="ECO:0007669"/>
    <property type="project" value="UniProtKB-UniRule"/>
</dbReference>
<dbReference type="GO" id="GO:0044208">
    <property type="term" value="P:'de novo' AMP biosynthetic process"/>
    <property type="evidence" value="ECO:0007669"/>
    <property type="project" value="UniProtKB-UniRule"/>
</dbReference>
<dbReference type="GO" id="GO:0046040">
    <property type="term" value="P:IMP metabolic process"/>
    <property type="evidence" value="ECO:0007669"/>
    <property type="project" value="TreeGrafter"/>
</dbReference>
<dbReference type="CDD" id="cd03108">
    <property type="entry name" value="AdSS"/>
    <property type="match status" value="1"/>
</dbReference>
<dbReference type="FunFam" id="1.10.300.10:FF:000001">
    <property type="entry name" value="Adenylosuccinate synthetase"/>
    <property type="match status" value="1"/>
</dbReference>
<dbReference type="FunFam" id="3.90.170.10:FF:000001">
    <property type="entry name" value="Adenylosuccinate synthetase"/>
    <property type="match status" value="1"/>
</dbReference>
<dbReference type="Gene3D" id="3.40.440.10">
    <property type="entry name" value="Adenylosuccinate Synthetase, subunit A, domain 1"/>
    <property type="match status" value="1"/>
</dbReference>
<dbReference type="Gene3D" id="1.10.300.10">
    <property type="entry name" value="Adenylosuccinate Synthetase, subunit A, domain 2"/>
    <property type="match status" value="1"/>
</dbReference>
<dbReference type="Gene3D" id="3.90.170.10">
    <property type="entry name" value="Adenylosuccinate Synthetase, subunit A, domain 3"/>
    <property type="match status" value="1"/>
</dbReference>
<dbReference type="HAMAP" id="MF_00011">
    <property type="entry name" value="Adenylosucc_synth"/>
    <property type="match status" value="1"/>
</dbReference>
<dbReference type="InterPro" id="IPR018220">
    <property type="entry name" value="Adenylosuccin_syn_GTP-bd"/>
</dbReference>
<dbReference type="InterPro" id="IPR033128">
    <property type="entry name" value="Adenylosuccin_syn_Lys_AS"/>
</dbReference>
<dbReference type="InterPro" id="IPR042109">
    <property type="entry name" value="Adenylosuccinate_synth_dom1"/>
</dbReference>
<dbReference type="InterPro" id="IPR042110">
    <property type="entry name" value="Adenylosuccinate_synth_dom2"/>
</dbReference>
<dbReference type="InterPro" id="IPR042111">
    <property type="entry name" value="Adenylosuccinate_synth_dom3"/>
</dbReference>
<dbReference type="InterPro" id="IPR001114">
    <property type="entry name" value="Adenylosuccinate_synthetase"/>
</dbReference>
<dbReference type="InterPro" id="IPR027417">
    <property type="entry name" value="P-loop_NTPase"/>
</dbReference>
<dbReference type="NCBIfam" id="NF002223">
    <property type="entry name" value="PRK01117.1"/>
    <property type="match status" value="1"/>
</dbReference>
<dbReference type="NCBIfam" id="TIGR00184">
    <property type="entry name" value="purA"/>
    <property type="match status" value="1"/>
</dbReference>
<dbReference type="PANTHER" id="PTHR11846">
    <property type="entry name" value="ADENYLOSUCCINATE SYNTHETASE"/>
    <property type="match status" value="1"/>
</dbReference>
<dbReference type="PANTHER" id="PTHR11846:SF0">
    <property type="entry name" value="ADENYLOSUCCINATE SYNTHETASE"/>
    <property type="match status" value="1"/>
</dbReference>
<dbReference type="Pfam" id="PF00709">
    <property type="entry name" value="Adenylsucc_synt"/>
    <property type="match status" value="1"/>
</dbReference>
<dbReference type="SMART" id="SM00788">
    <property type="entry name" value="Adenylsucc_synt"/>
    <property type="match status" value="1"/>
</dbReference>
<dbReference type="SUPFAM" id="SSF52540">
    <property type="entry name" value="P-loop containing nucleoside triphosphate hydrolases"/>
    <property type="match status" value="1"/>
</dbReference>
<dbReference type="PROSITE" id="PS01266">
    <property type="entry name" value="ADENYLOSUCCIN_SYN_1"/>
    <property type="match status" value="1"/>
</dbReference>
<dbReference type="PROSITE" id="PS00513">
    <property type="entry name" value="ADENYLOSUCCIN_SYN_2"/>
    <property type="match status" value="1"/>
</dbReference>
<organism>
    <name type="scientific">Chromohalobacter salexigens (strain ATCC BAA-138 / DSM 3043 / CIP 106854 / NCIMB 13768 / 1H11)</name>
    <dbReference type="NCBI Taxonomy" id="290398"/>
    <lineage>
        <taxon>Bacteria</taxon>
        <taxon>Pseudomonadati</taxon>
        <taxon>Pseudomonadota</taxon>
        <taxon>Gammaproteobacteria</taxon>
        <taxon>Oceanospirillales</taxon>
        <taxon>Halomonadaceae</taxon>
        <taxon>Chromohalobacter</taxon>
    </lineage>
</organism>
<name>PURA_CHRSD</name>
<gene>
    <name evidence="1" type="primary">purA</name>
    <name type="ordered locus">Csal_1282</name>
</gene>